<feature type="chain" id="PRO_0000368864" description="ATP synthase subunit b 1">
    <location>
        <begin position="1"/>
        <end position="163"/>
    </location>
</feature>
<feature type="transmembrane region" description="Helical" evidence="1">
    <location>
        <begin position="6"/>
        <end position="26"/>
    </location>
</feature>
<keyword id="KW-0066">ATP synthesis</keyword>
<keyword id="KW-0997">Cell inner membrane</keyword>
<keyword id="KW-1003">Cell membrane</keyword>
<keyword id="KW-0138">CF(0)</keyword>
<keyword id="KW-0375">Hydrogen ion transport</keyword>
<keyword id="KW-0406">Ion transport</keyword>
<keyword id="KW-0472">Membrane</keyword>
<keyword id="KW-1185">Reference proteome</keyword>
<keyword id="KW-0812">Transmembrane</keyword>
<keyword id="KW-1133">Transmembrane helix</keyword>
<keyword id="KW-0813">Transport</keyword>
<reference key="1">
    <citation type="submission" date="2007-07" db="EMBL/GenBank/DDBJ databases">
        <title>Complete sequence of chromosome of Xanthobacter autotrophicus Py2.</title>
        <authorList>
            <consortium name="US DOE Joint Genome Institute"/>
            <person name="Copeland A."/>
            <person name="Lucas S."/>
            <person name="Lapidus A."/>
            <person name="Barry K."/>
            <person name="Glavina del Rio T."/>
            <person name="Hammon N."/>
            <person name="Israni S."/>
            <person name="Dalin E."/>
            <person name="Tice H."/>
            <person name="Pitluck S."/>
            <person name="Sims D."/>
            <person name="Brettin T."/>
            <person name="Bruce D."/>
            <person name="Detter J.C."/>
            <person name="Han C."/>
            <person name="Tapia R."/>
            <person name="Brainard J."/>
            <person name="Schmutz J."/>
            <person name="Larimer F."/>
            <person name="Land M."/>
            <person name="Hauser L."/>
            <person name="Kyrpides N."/>
            <person name="Kim E."/>
            <person name="Ensigns S.A."/>
            <person name="Richardson P."/>
        </authorList>
    </citation>
    <scope>NUCLEOTIDE SEQUENCE [LARGE SCALE GENOMIC DNA]</scope>
    <source>
        <strain>ATCC BAA-1158 / Py2</strain>
    </source>
</reference>
<gene>
    <name evidence="1" type="primary">atpF1</name>
    <name type="ordered locus">Xaut_1976</name>
</gene>
<sequence length="163" mass="17517">MNEMSLAELWVAVAFLLFVGILIYVGAHRAIGSALDSRGQRIAAELEEARRLKEEAQKLVAEFKRKQREAEAEAESIVTAAKAEAERLASEAKAKLEDFVTRRTKMAEDKIAQAELQAVADVKAIAADAAAKAAEVLLGSAARGDVGDRLISNAIGEVKTKLN</sequence>
<accession>A7IGS7</accession>
<name>ATPF1_XANP2</name>
<proteinExistence type="inferred from homology"/>
<evidence type="ECO:0000255" key="1">
    <source>
        <dbReference type="HAMAP-Rule" id="MF_01398"/>
    </source>
</evidence>
<dbReference type="EMBL" id="CP000781">
    <property type="protein sequence ID" value="ABS67220.1"/>
    <property type="molecule type" value="Genomic_DNA"/>
</dbReference>
<dbReference type="SMR" id="A7IGS7"/>
<dbReference type="STRING" id="78245.Xaut_1976"/>
<dbReference type="KEGG" id="xau:Xaut_1976"/>
<dbReference type="eggNOG" id="COG0711">
    <property type="taxonomic scope" value="Bacteria"/>
</dbReference>
<dbReference type="HOGENOM" id="CLU_079215_6_1_5"/>
<dbReference type="OrthoDB" id="8479836at2"/>
<dbReference type="PhylomeDB" id="A7IGS7"/>
<dbReference type="Proteomes" id="UP000002417">
    <property type="component" value="Chromosome"/>
</dbReference>
<dbReference type="GO" id="GO:0005886">
    <property type="term" value="C:plasma membrane"/>
    <property type="evidence" value="ECO:0007669"/>
    <property type="project" value="UniProtKB-SubCell"/>
</dbReference>
<dbReference type="GO" id="GO:0045259">
    <property type="term" value="C:proton-transporting ATP synthase complex"/>
    <property type="evidence" value="ECO:0007669"/>
    <property type="project" value="UniProtKB-KW"/>
</dbReference>
<dbReference type="GO" id="GO:0046933">
    <property type="term" value="F:proton-transporting ATP synthase activity, rotational mechanism"/>
    <property type="evidence" value="ECO:0007669"/>
    <property type="project" value="UniProtKB-UniRule"/>
</dbReference>
<dbReference type="GO" id="GO:0046961">
    <property type="term" value="F:proton-transporting ATPase activity, rotational mechanism"/>
    <property type="evidence" value="ECO:0007669"/>
    <property type="project" value="TreeGrafter"/>
</dbReference>
<dbReference type="CDD" id="cd06503">
    <property type="entry name" value="ATP-synt_Fo_b"/>
    <property type="match status" value="1"/>
</dbReference>
<dbReference type="HAMAP" id="MF_01398">
    <property type="entry name" value="ATP_synth_b_bprime"/>
    <property type="match status" value="1"/>
</dbReference>
<dbReference type="InterPro" id="IPR002146">
    <property type="entry name" value="ATP_synth_b/b'su_bac/chlpt"/>
</dbReference>
<dbReference type="InterPro" id="IPR050059">
    <property type="entry name" value="ATP_synthase_B_chain"/>
</dbReference>
<dbReference type="PANTHER" id="PTHR33445:SF1">
    <property type="entry name" value="ATP SYNTHASE SUBUNIT B"/>
    <property type="match status" value="1"/>
</dbReference>
<dbReference type="PANTHER" id="PTHR33445">
    <property type="entry name" value="ATP SYNTHASE SUBUNIT B', CHLOROPLASTIC"/>
    <property type="match status" value="1"/>
</dbReference>
<dbReference type="Pfam" id="PF00430">
    <property type="entry name" value="ATP-synt_B"/>
    <property type="match status" value="1"/>
</dbReference>
<comment type="function">
    <text evidence="1">F(1)F(0) ATP synthase produces ATP from ADP in the presence of a proton or sodium gradient. F-type ATPases consist of two structural domains, F(1) containing the extramembraneous catalytic core and F(0) containing the membrane proton channel, linked together by a central stalk and a peripheral stalk. During catalysis, ATP synthesis in the catalytic domain of F(1) is coupled via a rotary mechanism of the central stalk subunits to proton translocation.</text>
</comment>
<comment type="function">
    <text evidence="1">Component of the F(0) channel, it forms part of the peripheral stalk, linking F(1) to F(0).</text>
</comment>
<comment type="subunit">
    <text evidence="1">F-type ATPases have 2 components, F(1) - the catalytic core - and F(0) - the membrane proton channel. F(1) has five subunits: alpha(3), beta(3), gamma(1), delta(1), epsilon(1). F(0) has three main subunits: a(1), b(2) and c(10-14). The alpha and beta chains form an alternating ring which encloses part of the gamma chain. F(1) is attached to F(0) by a central stalk formed by the gamma and epsilon chains, while a peripheral stalk is formed by the delta and b chains.</text>
</comment>
<comment type="subcellular location">
    <subcellularLocation>
        <location evidence="1">Cell inner membrane</location>
        <topology evidence="1">Single-pass membrane protein</topology>
    </subcellularLocation>
</comment>
<comment type="similarity">
    <text evidence="1">Belongs to the ATPase B chain family.</text>
</comment>
<organism>
    <name type="scientific">Xanthobacter autotrophicus (strain ATCC BAA-1158 / Py2)</name>
    <dbReference type="NCBI Taxonomy" id="78245"/>
    <lineage>
        <taxon>Bacteria</taxon>
        <taxon>Pseudomonadati</taxon>
        <taxon>Pseudomonadota</taxon>
        <taxon>Alphaproteobacteria</taxon>
        <taxon>Hyphomicrobiales</taxon>
        <taxon>Xanthobacteraceae</taxon>
        <taxon>Xanthobacter</taxon>
    </lineage>
</organism>
<protein>
    <recommendedName>
        <fullName evidence="1">ATP synthase subunit b 1</fullName>
    </recommendedName>
    <alternativeName>
        <fullName evidence="1">ATP synthase F(0) sector subunit b 1</fullName>
    </alternativeName>
    <alternativeName>
        <fullName evidence="1">ATPase subunit I 1</fullName>
    </alternativeName>
    <alternativeName>
        <fullName evidence="1">F-type ATPase subunit b 1</fullName>
        <shortName evidence="1">F-ATPase subunit b 1</shortName>
    </alternativeName>
</protein>